<gene>
    <name evidence="1" type="primary">pckA</name>
    <name type="ordered locus">Sputcn32_3571</name>
</gene>
<comment type="function">
    <text evidence="1">Involved in the gluconeogenesis. Catalyzes the conversion of oxaloacetate (OAA) to phosphoenolpyruvate (PEP) through direct phosphoryl transfer between the nucleoside triphosphate and OAA.</text>
</comment>
<comment type="catalytic activity">
    <reaction evidence="1">
        <text>oxaloacetate + ATP = phosphoenolpyruvate + ADP + CO2</text>
        <dbReference type="Rhea" id="RHEA:18617"/>
        <dbReference type="ChEBI" id="CHEBI:16452"/>
        <dbReference type="ChEBI" id="CHEBI:16526"/>
        <dbReference type="ChEBI" id="CHEBI:30616"/>
        <dbReference type="ChEBI" id="CHEBI:58702"/>
        <dbReference type="ChEBI" id="CHEBI:456216"/>
        <dbReference type="EC" id="4.1.1.49"/>
    </reaction>
</comment>
<comment type="cofactor">
    <cofactor evidence="1">
        <name>Mn(2+)</name>
        <dbReference type="ChEBI" id="CHEBI:29035"/>
    </cofactor>
    <text evidence="1">Binds 1 Mn(2+) ion per subunit.</text>
</comment>
<comment type="pathway">
    <text evidence="1">Carbohydrate biosynthesis; gluconeogenesis.</text>
</comment>
<comment type="subunit">
    <text evidence="1">Monomer.</text>
</comment>
<comment type="subcellular location">
    <subcellularLocation>
        <location evidence="1">Cytoplasm</location>
    </subcellularLocation>
</comment>
<comment type="similarity">
    <text evidence="1">Belongs to the phosphoenolpyruvate carboxykinase (ATP) family.</text>
</comment>
<organism>
    <name type="scientific">Shewanella putrefaciens (strain CN-32 / ATCC BAA-453)</name>
    <dbReference type="NCBI Taxonomy" id="319224"/>
    <lineage>
        <taxon>Bacteria</taxon>
        <taxon>Pseudomonadati</taxon>
        <taxon>Pseudomonadota</taxon>
        <taxon>Gammaproteobacteria</taxon>
        <taxon>Alteromonadales</taxon>
        <taxon>Shewanellaceae</taxon>
        <taxon>Shewanella</taxon>
    </lineage>
</organism>
<evidence type="ECO:0000255" key="1">
    <source>
        <dbReference type="HAMAP-Rule" id="MF_00453"/>
    </source>
</evidence>
<sequence>MADGLHRVHYNPSTAQLVEFALLRGEGELTANGALVAKTGARSGRSPGDRFIVKEPSSEADIEWGPVNQAFEPGAFEGLWARVEAYLADKELFVSDLEVGADTEHYQPVRVTTQYAWHQLFARNLFIIPEEFNRKDKPVWQIINAPDFVCDPARDGTNSDAAVILNFAERKVLLAGLKYAGEMKKSMFSVQNFLLPAQGVLPMHCSANVGKDGDTTLFFGLSGTGKTTLSADPKRFLIGDDEHGWAPGGVFNIEGGCYAKCIDLSQKNEPVIWDAIRFGTVLENVVMDEHRVPNYKDSSLTENTRAAYPLEHIAQRKEDKCGAEPHAVVFLTCDVSGVLPPVSILTKEQAAYHFLSGYTAKVGSTEIGSTSAIQSTFSTCFGAPFFPRPAGVYAELLMKRIESFGSQVYLVNTGWTGGPHGVGKRFDIPTTRAIVDAIVSGELKDVETIHLDTLNLAVPVAVTGVDSNLLNPINTWGDKALYAEYAQKLAEAFTKNFAKYQVSDAIRHAGPKA</sequence>
<keyword id="KW-0067">ATP-binding</keyword>
<keyword id="KW-0963">Cytoplasm</keyword>
<keyword id="KW-0210">Decarboxylase</keyword>
<keyword id="KW-0312">Gluconeogenesis</keyword>
<keyword id="KW-0456">Lyase</keyword>
<keyword id="KW-0464">Manganese</keyword>
<keyword id="KW-0479">Metal-binding</keyword>
<keyword id="KW-0547">Nucleotide-binding</keyword>
<accession>A4YBE7</accession>
<proteinExistence type="inferred from homology"/>
<protein>
    <recommendedName>
        <fullName evidence="1">Phosphoenolpyruvate carboxykinase (ATP)</fullName>
        <shortName evidence="1">PCK</shortName>
        <shortName evidence="1">PEP carboxykinase</shortName>
        <shortName evidence="1">PEPCK</shortName>
        <ecNumber evidence="1">4.1.1.49</ecNumber>
    </recommendedName>
</protein>
<feature type="chain" id="PRO_1000026355" description="Phosphoenolpyruvate carboxykinase (ATP)">
    <location>
        <begin position="1"/>
        <end position="513"/>
    </location>
</feature>
<feature type="binding site" evidence="1">
    <location>
        <position position="45"/>
    </location>
    <ligand>
        <name>substrate</name>
    </ligand>
</feature>
<feature type="binding site" evidence="1">
    <location>
        <position position="179"/>
    </location>
    <ligand>
        <name>substrate</name>
    </ligand>
</feature>
<feature type="binding site" evidence="1">
    <location>
        <position position="185"/>
    </location>
    <ligand>
        <name>ATP</name>
        <dbReference type="ChEBI" id="CHEBI:30616"/>
    </ligand>
</feature>
<feature type="binding site" evidence="1">
    <location>
        <position position="185"/>
    </location>
    <ligand>
        <name>Mn(2+)</name>
        <dbReference type="ChEBI" id="CHEBI:29035"/>
    </ligand>
</feature>
<feature type="binding site" evidence="1">
    <location>
        <position position="185"/>
    </location>
    <ligand>
        <name>substrate</name>
    </ligand>
</feature>
<feature type="binding site" evidence="1">
    <location>
        <position position="204"/>
    </location>
    <ligand>
        <name>ATP</name>
        <dbReference type="ChEBI" id="CHEBI:30616"/>
    </ligand>
</feature>
<feature type="binding site" evidence="1">
    <location>
        <position position="204"/>
    </location>
    <ligand>
        <name>Mn(2+)</name>
        <dbReference type="ChEBI" id="CHEBI:29035"/>
    </ligand>
</feature>
<feature type="binding site" evidence="1">
    <location>
        <begin position="220"/>
        <end position="228"/>
    </location>
    <ligand>
        <name>ATP</name>
        <dbReference type="ChEBI" id="CHEBI:30616"/>
    </ligand>
</feature>
<feature type="binding site" evidence="1">
    <location>
        <position position="241"/>
    </location>
    <ligand>
        <name>Mn(2+)</name>
        <dbReference type="ChEBI" id="CHEBI:29035"/>
    </ligand>
</feature>
<feature type="binding site" evidence="1">
    <location>
        <position position="269"/>
    </location>
    <ligand>
        <name>ATP</name>
        <dbReference type="ChEBI" id="CHEBI:30616"/>
    </ligand>
</feature>
<feature type="binding site" evidence="1">
    <location>
        <position position="305"/>
    </location>
    <ligand>
        <name>ATP</name>
        <dbReference type="ChEBI" id="CHEBI:30616"/>
    </ligand>
</feature>
<feature type="binding site" evidence="1">
    <location>
        <position position="305"/>
    </location>
    <ligand>
        <name>substrate</name>
    </ligand>
</feature>
<feature type="binding site" evidence="1">
    <location>
        <position position="431"/>
    </location>
    <ligand>
        <name>ATP</name>
        <dbReference type="ChEBI" id="CHEBI:30616"/>
    </ligand>
</feature>
<dbReference type="EC" id="4.1.1.49" evidence="1"/>
<dbReference type="EMBL" id="CP000681">
    <property type="protein sequence ID" value="ABP77280.1"/>
    <property type="molecule type" value="Genomic_DNA"/>
</dbReference>
<dbReference type="SMR" id="A4YBE7"/>
<dbReference type="STRING" id="319224.Sputcn32_3571"/>
<dbReference type="KEGG" id="spc:Sputcn32_3571"/>
<dbReference type="eggNOG" id="COG1866">
    <property type="taxonomic scope" value="Bacteria"/>
</dbReference>
<dbReference type="HOGENOM" id="CLU_018247_0_1_6"/>
<dbReference type="UniPathway" id="UPA00138"/>
<dbReference type="GO" id="GO:0005829">
    <property type="term" value="C:cytosol"/>
    <property type="evidence" value="ECO:0007669"/>
    <property type="project" value="TreeGrafter"/>
</dbReference>
<dbReference type="GO" id="GO:0005524">
    <property type="term" value="F:ATP binding"/>
    <property type="evidence" value="ECO:0007669"/>
    <property type="project" value="UniProtKB-UniRule"/>
</dbReference>
<dbReference type="GO" id="GO:0046872">
    <property type="term" value="F:metal ion binding"/>
    <property type="evidence" value="ECO:0007669"/>
    <property type="project" value="UniProtKB-KW"/>
</dbReference>
<dbReference type="GO" id="GO:0004612">
    <property type="term" value="F:phosphoenolpyruvate carboxykinase (ATP) activity"/>
    <property type="evidence" value="ECO:0007669"/>
    <property type="project" value="UniProtKB-UniRule"/>
</dbReference>
<dbReference type="GO" id="GO:0006094">
    <property type="term" value="P:gluconeogenesis"/>
    <property type="evidence" value="ECO:0007669"/>
    <property type="project" value="UniProtKB-UniRule"/>
</dbReference>
<dbReference type="CDD" id="cd00484">
    <property type="entry name" value="PEPCK_ATP"/>
    <property type="match status" value="1"/>
</dbReference>
<dbReference type="FunFam" id="2.170.8.10:FF:000001">
    <property type="entry name" value="Phosphoenolpyruvate carboxykinase (ATP)"/>
    <property type="match status" value="1"/>
</dbReference>
<dbReference type="Gene3D" id="3.90.228.20">
    <property type="match status" value="1"/>
</dbReference>
<dbReference type="Gene3D" id="3.40.449.10">
    <property type="entry name" value="Phosphoenolpyruvate Carboxykinase, domain 1"/>
    <property type="match status" value="1"/>
</dbReference>
<dbReference type="Gene3D" id="2.170.8.10">
    <property type="entry name" value="Phosphoenolpyruvate Carboxykinase, domain 2"/>
    <property type="match status" value="1"/>
</dbReference>
<dbReference type="HAMAP" id="MF_00453">
    <property type="entry name" value="PEPCK_ATP"/>
    <property type="match status" value="1"/>
</dbReference>
<dbReference type="InterPro" id="IPR001272">
    <property type="entry name" value="PEP_carboxykinase_ATP"/>
</dbReference>
<dbReference type="InterPro" id="IPR013035">
    <property type="entry name" value="PEP_carboxykinase_C"/>
</dbReference>
<dbReference type="InterPro" id="IPR008210">
    <property type="entry name" value="PEP_carboxykinase_N"/>
</dbReference>
<dbReference type="InterPro" id="IPR015994">
    <property type="entry name" value="PEPCK_ATP_CS"/>
</dbReference>
<dbReference type="NCBIfam" id="TIGR00224">
    <property type="entry name" value="pckA"/>
    <property type="match status" value="1"/>
</dbReference>
<dbReference type="NCBIfam" id="NF006820">
    <property type="entry name" value="PRK09344.1-2"/>
    <property type="match status" value="1"/>
</dbReference>
<dbReference type="NCBIfam" id="NF006821">
    <property type="entry name" value="PRK09344.1-3"/>
    <property type="match status" value="1"/>
</dbReference>
<dbReference type="NCBIfam" id="NF006823">
    <property type="entry name" value="PRK09344.1-5"/>
    <property type="match status" value="1"/>
</dbReference>
<dbReference type="PANTHER" id="PTHR30031:SF0">
    <property type="entry name" value="PHOSPHOENOLPYRUVATE CARBOXYKINASE (ATP)"/>
    <property type="match status" value="1"/>
</dbReference>
<dbReference type="PANTHER" id="PTHR30031">
    <property type="entry name" value="PHOSPHOENOLPYRUVATE CARBOXYKINASE ATP"/>
    <property type="match status" value="1"/>
</dbReference>
<dbReference type="Pfam" id="PF01293">
    <property type="entry name" value="PEPCK_ATP"/>
    <property type="match status" value="1"/>
</dbReference>
<dbReference type="PIRSF" id="PIRSF006294">
    <property type="entry name" value="PEP_crbxkin"/>
    <property type="match status" value="1"/>
</dbReference>
<dbReference type="SUPFAM" id="SSF68923">
    <property type="entry name" value="PEP carboxykinase N-terminal domain"/>
    <property type="match status" value="1"/>
</dbReference>
<dbReference type="SUPFAM" id="SSF53795">
    <property type="entry name" value="PEP carboxykinase-like"/>
    <property type="match status" value="1"/>
</dbReference>
<dbReference type="PROSITE" id="PS00532">
    <property type="entry name" value="PEPCK_ATP"/>
    <property type="match status" value="1"/>
</dbReference>
<name>PCKA_SHEPC</name>
<reference key="1">
    <citation type="submission" date="2007-04" db="EMBL/GenBank/DDBJ databases">
        <title>Complete sequence of Shewanella putrefaciens CN-32.</title>
        <authorList>
            <consortium name="US DOE Joint Genome Institute"/>
            <person name="Copeland A."/>
            <person name="Lucas S."/>
            <person name="Lapidus A."/>
            <person name="Barry K."/>
            <person name="Detter J.C."/>
            <person name="Glavina del Rio T."/>
            <person name="Hammon N."/>
            <person name="Israni S."/>
            <person name="Dalin E."/>
            <person name="Tice H."/>
            <person name="Pitluck S."/>
            <person name="Chain P."/>
            <person name="Malfatti S."/>
            <person name="Shin M."/>
            <person name="Vergez L."/>
            <person name="Schmutz J."/>
            <person name="Larimer F."/>
            <person name="Land M."/>
            <person name="Hauser L."/>
            <person name="Kyrpides N."/>
            <person name="Mikhailova N."/>
            <person name="Romine M.F."/>
            <person name="Fredrickson J."/>
            <person name="Tiedje J."/>
            <person name="Richardson P."/>
        </authorList>
    </citation>
    <scope>NUCLEOTIDE SEQUENCE [LARGE SCALE GENOMIC DNA]</scope>
    <source>
        <strain>CN-32 / ATCC BAA-453</strain>
    </source>
</reference>